<sequence length="278" mass="32274">MAVAYADKPNHFINFPLTQFEGFVLNYKGLQFQLLDEGVDCKIQTAPHISLAMLDIQPEDYRSVDVAIQEVIDDMHWGEGFQIKFDNPHILGRCIVLDVKGVEELHDDLVNYIRDKGCVADQSRKWIGHCTIAQLTNAALSIKENVDFINSMQFNYKITINPSSPARLEIVKLGAEKKDGFYETIVSHWMGIRFEYNPPTDKLAMIMGYCCLEVVRKELEEGDLPENDDDAWFKLSYHYENNSWFFRHVYRKSFYFRKSCQNLDCNCLGFYESSVEED</sequence>
<dbReference type="EMBL" id="AF058942">
    <property type="protein sequence ID" value="AAF25497.1"/>
    <property type="molecule type" value="Genomic_RNA"/>
</dbReference>
<dbReference type="SMR" id="Q9QAS3"/>
<dbReference type="Gene3D" id="3.90.1140.10">
    <property type="entry name" value="Cyclic phosphodiesterase"/>
    <property type="match status" value="1"/>
</dbReference>
<dbReference type="InterPro" id="IPR007878">
    <property type="entry name" value="Coronavirus_NS2A"/>
</dbReference>
<dbReference type="InterPro" id="IPR039573">
    <property type="entry name" value="NS2A-like"/>
</dbReference>
<dbReference type="Pfam" id="PF05213">
    <property type="entry name" value="Corona_NS2A"/>
    <property type="match status" value="1"/>
</dbReference>
<dbReference type="PIRSF" id="PIRSF003890">
    <property type="entry name" value="LigT_coronavirus"/>
    <property type="match status" value="1"/>
</dbReference>
<reference key="1">
    <citation type="journal article" date="1998" name="Virus Genes">
        <title>Nucleotide and predicted amino acid sequences of all genes encoded by the 3' genomic portion (9.5 kb) of respiratory bovine coronaviruses and comparisons among respiratory and enteric coronaviruses.</title>
        <authorList>
            <person name="Chouljenko V.N."/>
            <person name="Kousoulas K.G."/>
            <person name="Lin X.Q."/>
            <person name="Storz J."/>
        </authorList>
    </citation>
    <scope>NUCLEOTIDE SEQUENCE [GENOMIC RNA]</scope>
</reference>
<proteinExistence type="inferred from homology"/>
<accession>Q9QAS3</accession>
<name>NS2A_CVBLY</name>
<organism>
    <name type="scientific">Bovine coronavirus (strain LY-138)</name>
    <name type="common">BCoV</name>
    <name type="synonym">BCV</name>
    <dbReference type="NCBI Taxonomy" id="11131"/>
    <lineage>
        <taxon>Viruses</taxon>
        <taxon>Riboviria</taxon>
        <taxon>Orthornavirae</taxon>
        <taxon>Pisuviricota</taxon>
        <taxon>Pisoniviricetes</taxon>
        <taxon>Nidovirales</taxon>
        <taxon>Cornidovirineae</taxon>
        <taxon>Coronaviridae</taxon>
        <taxon>Orthocoronavirinae</taxon>
        <taxon>Betacoronavirus</taxon>
        <taxon>Embecovirus</taxon>
        <taxon>Betacoronavirus 1</taxon>
    </lineage>
</organism>
<comment type="similarity">
    <text evidence="1">Belongs to the coronaviruses ns2a protein family.</text>
</comment>
<organismHost>
    <name type="scientific">Bos taurus</name>
    <name type="common">Bovine</name>
    <dbReference type="NCBI Taxonomy" id="9913"/>
</organismHost>
<protein>
    <recommendedName>
        <fullName>Non-structural protein 2a</fullName>
        <shortName>ns2a</shortName>
    </recommendedName>
    <alternativeName>
        <fullName>32 kDa accessory protein</fullName>
    </alternativeName>
    <alternativeName>
        <fullName>32 kDa non-structural protein</fullName>
    </alternativeName>
    <alternativeName>
        <fullName>ns2</fullName>
    </alternativeName>
</protein>
<feature type="chain" id="PRO_0000283935" description="Non-structural protein 2a">
    <location>
        <begin position="1"/>
        <end position="278"/>
    </location>
</feature>
<gene>
    <name type="ORF">2a</name>
</gene>
<evidence type="ECO:0000305" key="1"/>